<gene>
    <name type="primary">HA</name>
</gene>
<keyword id="KW-1167">Clathrin- and caveolin-independent endocytosis of virus by host</keyword>
<keyword id="KW-1165">Clathrin-mediated endocytosis of virus by host</keyword>
<keyword id="KW-1015">Disulfide bond</keyword>
<keyword id="KW-1170">Fusion of virus membrane with host endosomal membrane</keyword>
<keyword id="KW-1168">Fusion of virus membrane with host membrane</keyword>
<keyword id="KW-0325">Glycoprotein</keyword>
<keyword id="KW-0348">Hemagglutinin</keyword>
<keyword id="KW-1032">Host cell membrane</keyword>
<keyword id="KW-1043">Host membrane</keyword>
<keyword id="KW-0945">Host-virus interaction</keyword>
<keyword id="KW-0449">Lipoprotein</keyword>
<keyword id="KW-0472">Membrane</keyword>
<keyword id="KW-0564">Palmitate</keyword>
<keyword id="KW-0732">Signal</keyword>
<keyword id="KW-0812">Transmembrane</keyword>
<keyword id="KW-1161">Viral attachment to host cell</keyword>
<keyword id="KW-0261">Viral envelope protein</keyword>
<keyword id="KW-1162">Viral penetration into host cytoplasm</keyword>
<keyword id="KW-0946">Virion</keyword>
<keyword id="KW-1164">Virus endocytosis by host</keyword>
<keyword id="KW-1160">Virus entry into host cell</keyword>
<feature type="signal peptide" evidence="2">
    <location>
        <begin position="1"/>
        <end position="17"/>
    </location>
</feature>
<feature type="chain" id="PRO_0000039072" description="Hemagglutinin HA1 chain">
    <location>
        <begin position="18"/>
        <end position="343"/>
    </location>
</feature>
<feature type="glycosylation site" description="N-linked (GlcNAc...) asparagine; by host" evidence="2">
    <location>
        <position position="27"/>
    </location>
</feature>
<feature type="glycosylation site" description="N-linked (GlcNAc...) asparagine; by host" evidence="2">
    <location>
        <position position="28"/>
    </location>
</feature>
<feature type="glycosylation site" description="N-linked (GlcNAc...) asparagine; by host" evidence="2">
    <location>
        <position position="40"/>
    </location>
</feature>
<feature type="glycosylation site" description="N-linked (GlcNAc...) asparagine; by host" evidence="2">
    <location>
        <position position="71"/>
    </location>
</feature>
<feature type="glycosylation site" description="N-linked (GlcNAc...) asparagine; by host" evidence="2">
    <location>
        <position position="104"/>
    </location>
</feature>
<feature type="glycosylation site" description="N-linked (GlcNAc...) asparagine; by host" evidence="2">
    <location>
        <position position="142"/>
    </location>
</feature>
<feature type="glycosylation site" description="N-linked (GlcNAc...) asparagine; by host" evidence="2">
    <location>
        <position position="177"/>
    </location>
</feature>
<feature type="glycosylation site" description="N-linked (GlcNAc...) asparagine; by host" evidence="2">
    <location>
        <position position="286"/>
    </location>
</feature>
<feature type="glycosylation site" description="N-linked (GlcNAc...) asparagine; by host" evidence="2">
    <location>
        <position position="304"/>
    </location>
</feature>
<feature type="disulfide bond" evidence="1">
    <location>
        <begin position="59"/>
        <end position="292"/>
    </location>
</feature>
<feature type="disulfide bond" evidence="1">
    <location>
        <begin position="72"/>
        <end position="84"/>
    </location>
</feature>
<feature type="disulfide bond" evidence="1">
    <location>
        <begin position="107"/>
        <end position="153"/>
    </location>
</feature>
<feature type="disulfide bond" evidence="1">
    <location>
        <begin position="296"/>
        <end position="320"/>
    </location>
</feature>
<feature type="non-terminal residue">
    <location>
        <position position="344"/>
    </location>
</feature>
<proteinExistence type="inferred from homology"/>
<sequence length="344" mass="38569">MKAKLLVLFCAFTATDADTICIGYHANNSTDTVDTVLEKNVTVTHSVNLLEDSHNGKLCRLKGIAPLQLGNCSIAGWILGNPECESLFSQKSWSYIAETPNSENGTCYPGYFADYEELREQLSSVSSFERFEIFPKESSWPNHTVTKGVTASCSHKGKSSFYRNLLWLTEKNGLYPNLSKSYVNNKEKEVLVLWGVHHPSNIGDQRAIYRTENAYVSVVSSHYNRRFIPEIAKRPKVRGQEGRINYYWTLLEPRDTIIFEANGNLIAPWYAFALSRGFGSGIITSNASMDECDAKCQTPQGAINSSLPFQNVHPVTIGECPKYVRSTKLRMVTGLRNIPSIQSR</sequence>
<name>HEMA_I89A5</name>
<reference key="1">
    <citation type="journal article" date="1992" name="J. Gen. Virol.">
        <title>Human influenza A (H1N2) viruses isolated from China.</title>
        <authorList>
            <person name="Guo Y."/>
            <person name="Xu X."/>
            <person name="Cox N.J."/>
        </authorList>
    </citation>
    <scope>NUCLEOTIDE SEQUENCE [GENOMIC RNA]</scope>
</reference>
<accession>P28731</accession>
<protein>
    <recommendedName>
        <fullName>Hemagglutinin</fullName>
    </recommendedName>
    <component>
        <recommendedName>
            <fullName>Hemagglutinin HA1 chain</fullName>
        </recommendedName>
    </component>
</protein>
<comment type="function">
    <text>Binds to sialic acid-containing receptors on the cell surface, bringing about the attachment of the virus particle to the cell. This attachment induces virion internalization of about two third of the virus particles through clathrin-dependent endocytosis and about one third through a clathrin- and caveolin-independent pathway. Plays a major role in the determination of host range restriction and virulence. Class I viral fusion protein. Responsible for penetration of the virus into the cell cytoplasm by mediating the fusion of the membrane of the endocytosed virus particle with the endosomal membrane. Low pH in endosomes induces an irreversible conformational change in HA2, releasing the fusion hydrophobic peptide. Several trimers are required to form a competent fusion pore.</text>
</comment>
<comment type="subunit">
    <text>Homotrimer of disulfide-linked HA1-HA2.</text>
</comment>
<comment type="subcellular location">
    <subcellularLocation>
        <location evidence="3">Virion membrane</location>
        <topology evidence="3">Single-pass type I membrane protein</topology>
    </subcellularLocation>
    <subcellularLocation>
        <location>Host apical cell membrane</location>
        <topology>Single-pass type I membrane protein</topology>
    </subcellularLocation>
    <text>Targeted to the apical plasma membrane in epithelial polarized cells through a signal present in the transmembrane domain. Associated with glycosphingolipid- and cholesterol-enriched detergent-resistant lipid rafts.</text>
</comment>
<comment type="PTM">
    <text evidence="1">In natural infection, inactive HA is matured into HA1 and HA2 outside the cell by one or more trypsin-like, arginine-specific endoprotease secreted by the bronchial epithelial cells. One identified protease that may be involved in this process is secreted in lungs by club cells (By similarity).</text>
</comment>
<comment type="PTM">
    <text evidence="1">Palmitoylated.</text>
</comment>
<comment type="miscellaneous">
    <text>Major glycoprotein, comprises over 80% of the envelope proteins present in virus particle.</text>
</comment>
<comment type="miscellaneous">
    <text>The extent of infection into host organism is determined by HA. Influenza viruses bud from the apical surface of polarized epithelial cells (e.g. bronchial epithelial cells) into lumen of lungs and are therefore usually pneumotropic. The reason is that HA is cleaved by tryptase clara which is restricted to lungs. However, HAs of H5 and H7 pantropic avian viruses subtypes can be cleaved by furin and subtilisin-type enzymes, allowing the virus to grow in other organs than lungs.</text>
</comment>
<comment type="miscellaneous">
    <text>The influenza A genome consist of 8 RNA segments. Genetic variation of hemagglutinin and/or neuraminidase genes results in the emergence of new influenza strains. The mechanism of variation can be the result of point mutations or the result of genetic reassortment between segments of two different strains.</text>
</comment>
<comment type="similarity">
    <text evidence="3">Belongs to the influenza viruses hemagglutinin family.</text>
</comment>
<evidence type="ECO:0000250" key="1"/>
<evidence type="ECO:0000255" key="2"/>
<evidence type="ECO:0000305" key="3"/>
<organism>
    <name type="scientific">Influenza A virus (strain A/Xianfeng/3/1989 H1N2)</name>
    <dbReference type="NCBI Taxonomy" id="380981"/>
    <lineage>
        <taxon>Viruses</taxon>
        <taxon>Riboviria</taxon>
        <taxon>Orthornavirae</taxon>
        <taxon>Negarnaviricota</taxon>
        <taxon>Polyploviricotina</taxon>
        <taxon>Insthoviricetes</taxon>
        <taxon>Articulavirales</taxon>
        <taxon>Orthomyxoviridae</taxon>
        <taxon>Alphainfluenzavirus</taxon>
        <taxon>Alphainfluenzavirus influenzae</taxon>
        <taxon>Influenza A virus</taxon>
    </lineage>
</organism>
<organismHost>
    <name type="scientific">Aves</name>
    <dbReference type="NCBI Taxonomy" id="8782"/>
</organismHost>
<organismHost>
    <name type="scientific">Sus scrofa</name>
    <name type="common">Pig</name>
    <dbReference type="NCBI Taxonomy" id="9823"/>
</organismHost>
<dbReference type="EMBL" id="L19005">
    <property type="protein sequence ID" value="AAA99877.1"/>
    <property type="molecule type" value="Genomic_RNA"/>
</dbReference>
<dbReference type="SMR" id="P28731"/>
<dbReference type="GlyCosmos" id="P28731">
    <property type="glycosylation" value="9 sites, No reported glycans"/>
</dbReference>
<dbReference type="GO" id="GO:0020002">
    <property type="term" value="C:host cell plasma membrane"/>
    <property type="evidence" value="ECO:0007669"/>
    <property type="project" value="UniProtKB-SubCell"/>
</dbReference>
<dbReference type="GO" id="GO:0016020">
    <property type="term" value="C:membrane"/>
    <property type="evidence" value="ECO:0007669"/>
    <property type="project" value="UniProtKB-KW"/>
</dbReference>
<dbReference type="GO" id="GO:0019031">
    <property type="term" value="C:viral envelope"/>
    <property type="evidence" value="ECO:0007669"/>
    <property type="project" value="UniProtKB-KW"/>
</dbReference>
<dbReference type="GO" id="GO:0055036">
    <property type="term" value="C:virion membrane"/>
    <property type="evidence" value="ECO:0007669"/>
    <property type="project" value="UniProtKB-SubCell"/>
</dbReference>
<dbReference type="GO" id="GO:0046789">
    <property type="term" value="F:host cell surface receptor binding"/>
    <property type="evidence" value="ECO:0007669"/>
    <property type="project" value="InterPro"/>
</dbReference>
<dbReference type="GO" id="GO:0075512">
    <property type="term" value="P:clathrin-dependent endocytosis of virus by host cell"/>
    <property type="evidence" value="ECO:0007669"/>
    <property type="project" value="UniProtKB-KW"/>
</dbReference>
<dbReference type="GO" id="GO:0039654">
    <property type="term" value="P:fusion of virus membrane with host endosome membrane"/>
    <property type="evidence" value="ECO:0007669"/>
    <property type="project" value="UniProtKB-KW"/>
</dbReference>
<dbReference type="GO" id="GO:0019064">
    <property type="term" value="P:fusion of virus membrane with host plasma membrane"/>
    <property type="evidence" value="ECO:0007669"/>
    <property type="project" value="InterPro"/>
</dbReference>
<dbReference type="GO" id="GO:0019062">
    <property type="term" value="P:virion attachment to host cell"/>
    <property type="evidence" value="ECO:0007669"/>
    <property type="project" value="UniProtKB-KW"/>
</dbReference>
<dbReference type="Gene3D" id="3.90.209.20">
    <property type="match status" value="1"/>
</dbReference>
<dbReference type="Gene3D" id="2.10.77.10">
    <property type="entry name" value="Hemagglutinin Chain A, Domain 2"/>
    <property type="match status" value="1"/>
</dbReference>
<dbReference type="InterPro" id="IPR008980">
    <property type="entry name" value="Capsid_hemagglutn"/>
</dbReference>
<dbReference type="InterPro" id="IPR013828">
    <property type="entry name" value="Hemagglutn_HA1_a/b_dom_sf"/>
</dbReference>
<dbReference type="InterPro" id="IPR000149">
    <property type="entry name" value="Hemagglutn_influenz_A"/>
</dbReference>
<dbReference type="InterPro" id="IPR001364">
    <property type="entry name" value="Hemagglutn_influenz_A/B"/>
</dbReference>
<dbReference type="Pfam" id="PF00509">
    <property type="entry name" value="Hemagglutinin"/>
    <property type="match status" value="1"/>
</dbReference>
<dbReference type="PRINTS" id="PR00330">
    <property type="entry name" value="HEMAGGLUTN1"/>
</dbReference>
<dbReference type="PRINTS" id="PR00329">
    <property type="entry name" value="HEMAGGLUTN12"/>
</dbReference>
<dbReference type="SUPFAM" id="SSF49818">
    <property type="entry name" value="Viral protein domain"/>
    <property type="match status" value="1"/>
</dbReference>